<organism>
    <name type="scientific">Mycobacterium bovis (strain BCG / Pasteur 1173P2)</name>
    <dbReference type="NCBI Taxonomy" id="410289"/>
    <lineage>
        <taxon>Bacteria</taxon>
        <taxon>Bacillati</taxon>
        <taxon>Actinomycetota</taxon>
        <taxon>Actinomycetes</taxon>
        <taxon>Mycobacteriales</taxon>
        <taxon>Mycobacteriaceae</taxon>
        <taxon>Mycobacterium</taxon>
        <taxon>Mycobacterium tuberculosis complex</taxon>
    </lineage>
</organism>
<evidence type="ECO:0000255" key="1">
    <source>
        <dbReference type="HAMAP-Rule" id="MF_02111"/>
    </source>
</evidence>
<feature type="chain" id="PRO_0000395925" description="Pup--protein ligase">
    <location>
        <begin position="1"/>
        <end position="452"/>
    </location>
</feature>
<feature type="active site" description="Proton acceptor" evidence="1">
    <location>
        <position position="57"/>
    </location>
</feature>
<feature type="binding site" evidence="1">
    <location>
        <position position="9"/>
    </location>
    <ligand>
        <name>Mg(2+)</name>
        <dbReference type="ChEBI" id="CHEBI:18420"/>
    </ligand>
</feature>
<feature type="binding site" evidence="1">
    <location>
        <position position="53"/>
    </location>
    <ligand>
        <name>ATP</name>
        <dbReference type="ChEBI" id="CHEBI:30616"/>
    </ligand>
</feature>
<feature type="binding site" evidence="1">
    <location>
        <position position="55"/>
    </location>
    <ligand>
        <name>Mg(2+)</name>
        <dbReference type="ChEBI" id="CHEBI:18420"/>
    </ligand>
</feature>
<feature type="binding site" evidence="1">
    <location>
        <position position="63"/>
    </location>
    <ligand>
        <name>Mg(2+)</name>
        <dbReference type="ChEBI" id="CHEBI:18420"/>
    </ligand>
</feature>
<feature type="binding site" evidence="1">
    <location>
        <position position="66"/>
    </location>
    <ligand>
        <name>ATP</name>
        <dbReference type="ChEBI" id="CHEBI:30616"/>
    </ligand>
</feature>
<feature type="binding site" evidence="1">
    <location>
        <position position="419"/>
    </location>
    <ligand>
        <name>ATP</name>
        <dbReference type="ChEBI" id="CHEBI:30616"/>
    </ligand>
</feature>
<gene>
    <name evidence="1" type="primary">pafA</name>
    <name type="ordered locus">BCG_2117c</name>
</gene>
<sequence length="452" mass="51384">MQRRIMGIETEFGVTCTFHGHRRLSPDEVARYLFRRVVSWGRSSNVFLRNGARLYLDVGSHPEYATAECDSLVQLVTHDRAGEWVLEDLLVDAEQRLADEGIGGDIYLFKNNTDSAGNSYGCHENYLIVRAGEFSRISDVLLPFLVTRQLICGAGKVLQTPKAATYCLSQRAEHIWEGVSSATTRSRPIINTRDEPHADAEKYRRLHVIVGDSNMSETTTMLKVGTAALVLEMIESGVAFRDFSLDNPIRAIREVSHDVTGRRPVRLAGGRQASALDIQREYYTRAVEHLQTREPNAQIEQVVDLWGRQLDAVESQDFAKVDTEIDWVIKRKLFQRYQDRYDMELSHPKIAQLDLAYHDIKRGRGIFDLLQRKGLAARVTTDEEIAEAVDQPPQTTRARLRGEFISAAQEAGRDFTVDWVHLKLNDQAQRTVLCKDPFRAVDERVKRLIASM</sequence>
<protein>
    <recommendedName>
        <fullName evidence="1">Pup--protein ligase</fullName>
        <ecNumber evidence="1">6.3.1.19</ecNumber>
    </recommendedName>
    <alternativeName>
        <fullName evidence="1">Proteasome accessory factor A</fullName>
    </alternativeName>
    <alternativeName>
        <fullName evidence="1">Pup-conjugating enzyme</fullName>
    </alternativeName>
</protein>
<proteinExistence type="inferred from homology"/>
<name>PAFA_MYCBP</name>
<dbReference type="EC" id="6.3.1.19" evidence="1"/>
<dbReference type="EMBL" id="AM408590">
    <property type="protein sequence ID" value="CAL72105.1"/>
    <property type="molecule type" value="Genomic_DNA"/>
</dbReference>
<dbReference type="RefSeq" id="WP_003410781.1">
    <property type="nucleotide sequence ID" value="NC_008769.1"/>
</dbReference>
<dbReference type="SMR" id="A1KKE3"/>
<dbReference type="GeneID" id="45426074"/>
<dbReference type="KEGG" id="mbb:BCG_2117c"/>
<dbReference type="HOGENOM" id="CLU_040524_0_1_11"/>
<dbReference type="UniPathway" id="UPA00997"/>
<dbReference type="UniPathway" id="UPA00998"/>
<dbReference type="Proteomes" id="UP000001472">
    <property type="component" value="Chromosome"/>
</dbReference>
<dbReference type="GO" id="GO:0005524">
    <property type="term" value="F:ATP binding"/>
    <property type="evidence" value="ECO:0007669"/>
    <property type="project" value="UniProtKB-UniRule"/>
</dbReference>
<dbReference type="GO" id="GO:0016879">
    <property type="term" value="F:ligase activity, forming carbon-nitrogen bonds"/>
    <property type="evidence" value="ECO:0007669"/>
    <property type="project" value="InterPro"/>
</dbReference>
<dbReference type="GO" id="GO:0000287">
    <property type="term" value="F:magnesium ion binding"/>
    <property type="evidence" value="ECO:0007669"/>
    <property type="project" value="UniProtKB-UniRule"/>
</dbReference>
<dbReference type="GO" id="GO:0019787">
    <property type="term" value="F:ubiquitin-like protein transferase activity"/>
    <property type="evidence" value="ECO:0007669"/>
    <property type="project" value="UniProtKB-UniRule"/>
</dbReference>
<dbReference type="GO" id="GO:0019941">
    <property type="term" value="P:modification-dependent protein catabolic process"/>
    <property type="evidence" value="ECO:0007669"/>
    <property type="project" value="UniProtKB-UniRule"/>
</dbReference>
<dbReference type="GO" id="GO:0010498">
    <property type="term" value="P:proteasomal protein catabolic process"/>
    <property type="evidence" value="ECO:0007669"/>
    <property type="project" value="UniProtKB-UniRule"/>
</dbReference>
<dbReference type="GO" id="GO:0070490">
    <property type="term" value="P:protein pupylation"/>
    <property type="evidence" value="ECO:0007669"/>
    <property type="project" value="UniProtKB-UniRule"/>
</dbReference>
<dbReference type="HAMAP" id="MF_02111">
    <property type="entry name" value="Pup_ligase"/>
    <property type="match status" value="1"/>
</dbReference>
<dbReference type="InterPro" id="IPR022279">
    <property type="entry name" value="Pup_ligase"/>
</dbReference>
<dbReference type="InterPro" id="IPR004347">
    <property type="entry name" value="Pup_ligase/deamidase"/>
</dbReference>
<dbReference type="NCBIfam" id="TIGR03686">
    <property type="entry name" value="pupylate_PafA"/>
    <property type="match status" value="1"/>
</dbReference>
<dbReference type="PANTHER" id="PTHR42307">
    <property type="entry name" value="PUP DEAMIDASE/DEPUPYLASE"/>
    <property type="match status" value="1"/>
</dbReference>
<dbReference type="PANTHER" id="PTHR42307:SF3">
    <property type="entry name" value="PUP--PROTEIN LIGASE"/>
    <property type="match status" value="1"/>
</dbReference>
<dbReference type="Pfam" id="PF03136">
    <property type="entry name" value="Pup_ligase"/>
    <property type="match status" value="1"/>
</dbReference>
<dbReference type="PIRSF" id="PIRSF018077">
    <property type="entry name" value="UCP018077"/>
    <property type="match status" value="1"/>
</dbReference>
<comment type="function">
    <text evidence="1">Catalyzes the covalent attachment of the prokaryotic ubiquitin-like protein modifier Pup to the proteasomal substrate proteins, thereby targeting them for proteasomal degradation. This tagging system is termed pupylation. The ligation reaction involves the side-chain carboxylate of the C-terminal glutamate of Pup and the side-chain amino group of a substrate lysine.</text>
</comment>
<comment type="catalytic activity">
    <reaction evidence="1">
        <text>ATP + [prokaryotic ubiquitin-like protein]-L-glutamate + [protein]-L-lysine = ADP + phosphate + N(6)-([prokaryotic ubiquitin-like protein]-gamma-L-glutamyl)-[protein]-L-lysine.</text>
        <dbReference type="EC" id="6.3.1.19"/>
    </reaction>
</comment>
<comment type="pathway">
    <text evidence="1">Protein degradation; proteasomal Pup-dependent pathway.</text>
</comment>
<comment type="pathway">
    <text evidence="1">Protein modification; protein pupylation.</text>
</comment>
<comment type="miscellaneous">
    <text evidence="1">The reaction mechanism probably proceeds via the activation of Pup by phosphorylation of its C-terminal glutamate, which is then subject to nucleophilic attack by the substrate lysine, resulting in an isopeptide bond and the release of phosphate as a good leaving group.</text>
</comment>
<comment type="similarity">
    <text evidence="1">Belongs to the Pup ligase/Pup deamidase family. Pup-conjugating enzyme subfamily.</text>
</comment>
<accession>A1KKE3</accession>
<reference key="1">
    <citation type="journal article" date="2007" name="Proc. Natl. Acad. Sci. U.S.A.">
        <title>Genome plasticity of BCG and impact on vaccine efficacy.</title>
        <authorList>
            <person name="Brosch R."/>
            <person name="Gordon S.V."/>
            <person name="Garnier T."/>
            <person name="Eiglmeier K."/>
            <person name="Frigui W."/>
            <person name="Valenti P."/>
            <person name="Dos Santos S."/>
            <person name="Duthoy S."/>
            <person name="Lacroix C."/>
            <person name="Garcia-Pelayo C."/>
            <person name="Inwald J.K."/>
            <person name="Golby P."/>
            <person name="Garcia J.N."/>
            <person name="Hewinson R.G."/>
            <person name="Behr M.A."/>
            <person name="Quail M.A."/>
            <person name="Churcher C."/>
            <person name="Barrell B.G."/>
            <person name="Parkhill J."/>
            <person name="Cole S.T."/>
        </authorList>
    </citation>
    <scope>NUCLEOTIDE SEQUENCE [LARGE SCALE GENOMIC DNA]</scope>
    <source>
        <strain>BCG / Pasteur 1173P2</strain>
    </source>
</reference>
<keyword id="KW-0067">ATP-binding</keyword>
<keyword id="KW-0436">Ligase</keyword>
<keyword id="KW-0460">Magnesium</keyword>
<keyword id="KW-0479">Metal-binding</keyword>
<keyword id="KW-0547">Nucleotide-binding</keyword>
<keyword id="KW-0833">Ubl conjugation pathway</keyword>